<dbReference type="EMBL" id="Z48756">
    <property type="protein sequence ID" value="CAA88652.1"/>
    <property type="status" value="ALT_SEQ"/>
    <property type="molecule type" value="Genomic_DNA"/>
</dbReference>
<dbReference type="EMBL" id="EF138821">
    <property type="protein sequence ID" value="ABL89189.1"/>
    <property type="molecule type" value="mRNA"/>
</dbReference>
<dbReference type="EMBL" id="BK006946">
    <property type="protein sequence ID" value="DAA10142.1"/>
    <property type="molecule type" value="Genomic_DNA"/>
</dbReference>
<dbReference type="PIR" id="S56056">
    <property type="entry name" value="S56056"/>
</dbReference>
<dbReference type="RefSeq" id="NP_013969.3">
    <property type="nucleotide sequence ID" value="NM_001182749.1"/>
</dbReference>
<dbReference type="PDB" id="3J6X">
    <property type="method" value="EM"/>
    <property type="resolution" value="6.10 A"/>
    <property type="chains" value="60=1-172"/>
</dbReference>
<dbReference type="PDB" id="3J6Y">
    <property type="method" value="EM"/>
    <property type="resolution" value="6.10 A"/>
    <property type="chains" value="60=1-172"/>
</dbReference>
<dbReference type="PDB" id="3J77">
    <property type="method" value="EM"/>
    <property type="resolution" value="6.20 A"/>
    <property type="chains" value="70=1-172"/>
</dbReference>
<dbReference type="PDB" id="3J78">
    <property type="method" value="EM"/>
    <property type="resolution" value="6.30 A"/>
    <property type="chains" value="70=1-172"/>
</dbReference>
<dbReference type="PDB" id="3JCT">
    <property type="method" value="EM"/>
    <property type="resolution" value="3.08 A"/>
    <property type="chains" value="S=1-172"/>
</dbReference>
<dbReference type="PDB" id="4U3M">
    <property type="method" value="X-ray"/>
    <property type="resolution" value="3.00 A"/>
    <property type="chains" value="N0/n0=1-172"/>
</dbReference>
<dbReference type="PDB" id="4U3N">
    <property type="method" value="X-ray"/>
    <property type="resolution" value="3.20 A"/>
    <property type="chains" value="N0/n0=1-172"/>
</dbReference>
<dbReference type="PDB" id="4U3U">
    <property type="method" value="X-ray"/>
    <property type="resolution" value="2.90 A"/>
    <property type="chains" value="N0/n0=1-172"/>
</dbReference>
<dbReference type="PDB" id="4U4N">
    <property type="method" value="X-ray"/>
    <property type="resolution" value="3.10 A"/>
    <property type="chains" value="N0/n0=1-172"/>
</dbReference>
<dbReference type="PDB" id="4U4O">
    <property type="method" value="X-ray"/>
    <property type="resolution" value="3.60 A"/>
    <property type="chains" value="N0/n0=1-172"/>
</dbReference>
<dbReference type="PDB" id="4U4Q">
    <property type="method" value="X-ray"/>
    <property type="resolution" value="3.00 A"/>
    <property type="chains" value="N0/n0=1-172"/>
</dbReference>
<dbReference type="PDB" id="4U4R">
    <property type="method" value="X-ray"/>
    <property type="resolution" value="2.80 A"/>
    <property type="chains" value="N0/n0=1-172"/>
</dbReference>
<dbReference type="PDB" id="4U4U">
    <property type="method" value="X-ray"/>
    <property type="resolution" value="3.00 A"/>
    <property type="chains" value="N0/n0=1-172"/>
</dbReference>
<dbReference type="PDB" id="4U4Y">
    <property type="method" value="X-ray"/>
    <property type="resolution" value="3.20 A"/>
    <property type="chains" value="N0/n0=1-172"/>
</dbReference>
<dbReference type="PDB" id="4U4Z">
    <property type="method" value="X-ray"/>
    <property type="resolution" value="3.10 A"/>
    <property type="chains" value="N0/n0=1-172"/>
</dbReference>
<dbReference type="PDB" id="4U50">
    <property type="method" value="X-ray"/>
    <property type="resolution" value="3.20 A"/>
    <property type="chains" value="N0/n0=1-172"/>
</dbReference>
<dbReference type="PDB" id="4U51">
    <property type="method" value="X-ray"/>
    <property type="resolution" value="3.20 A"/>
    <property type="chains" value="N0/n0=1-172"/>
</dbReference>
<dbReference type="PDB" id="4U52">
    <property type="method" value="X-ray"/>
    <property type="resolution" value="3.00 A"/>
    <property type="chains" value="N0/n0=1-172"/>
</dbReference>
<dbReference type="PDB" id="4U53">
    <property type="method" value="X-ray"/>
    <property type="resolution" value="3.30 A"/>
    <property type="chains" value="N0/n0=1-172"/>
</dbReference>
<dbReference type="PDB" id="4U55">
    <property type="method" value="X-ray"/>
    <property type="resolution" value="3.20 A"/>
    <property type="chains" value="N0/n0=1-172"/>
</dbReference>
<dbReference type="PDB" id="4U56">
    <property type="method" value="X-ray"/>
    <property type="resolution" value="3.45 A"/>
    <property type="chains" value="N0/n0=1-172"/>
</dbReference>
<dbReference type="PDB" id="4U6F">
    <property type="method" value="X-ray"/>
    <property type="resolution" value="3.10 A"/>
    <property type="chains" value="N0/n0=1-172"/>
</dbReference>
<dbReference type="PDB" id="4V7F">
    <property type="method" value="EM"/>
    <property type="resolution" value="8.70 A"/>
    <property type="chains" value="S=1-172"/>
</dbReference>
<dbReference type="PDB" id="4V88">
    <property type="method" value="X-ray"/>
    <property type="resolution" value="3.00 A"/>
    <property type="chains" value="BS/DS=1-172"/>
</dbReference>
<dbReference type="PDB" id="4V8T">
    <property type="method" value="EM"/>
    <property type="resolution" value="8.10 A"/>
    <property type="chains" value="S=1-172"/>
</dbReference>
<dbReference type="PDB" id="4V91">
    <property type="method" value="EM"/>
    <property type="resolution" value="3.70 A"/>
    <property type="chains" value="S=1-172"/>
</dbReference>
<dbReference type="PDB" id="5APN">
    <property type="method" value="EM"/>
    <property type="resolution" value="3.91 A"/>
    <property type="chains" value="S=1-172"/>
</dbReference>
<dbReference type="PDB" id="5APO">
    <property type="method" value="EM"/>
    <property type="resolution" value="3.41 A"/>
    <property type="chains" value="S=1-172"/>
</dbReference>
<dbReference type="PDB" id="5DAT">
    <property type="method" value="X-ray"/>
    <property type="resolution" value="3.15 A"/>
    <property type="chains" value="N0/n0=1-172"/>
</dbReference>
<dbReference type="PDB" id="5DC3">
    <property type="method" value="X-ray"/>
    <property type="resolution" value="3.25 A"/>
    <property type="chains" value="N0/n0=1-172"/>
</dbReference>
<dbReference type="PDB" id="5DGE">
    <property type="method" value="X-ray"/>
    <property type="resolution" value="3.45 A"/>
    <property type="chains" value="N0/n0=1-172"/>
</dbReference>
<dbReference type="PDB" id="5DGF">
    <property type="method" value="X-ray"/>
    <property type="resolution" value="3.30 A"/>
    <property type="chains" value="N0/n0=1-172"/>
</dbReference>
<dbReference type="PDB" id="5DGV">
    <property type="method" value="X-ray"/>
    <property type="resolution" value="3.10 A"/>
    <property type="chains" value="N0/n0=1-172"/>
</dbReference>
<dbReference type="PDB" id="5FCI">
    <property type="method" value="X-ray"/>
    <property type="resolution" value="3.40 A"/>
    <property type="chains" value="N0/n0=1-172"/>
</dbReference>
<dbReference type="PDB" id="5FCJ">
    <property type="method" value="X-ray"/>
    <property type="resolution" value="3.10 A"/>
    <property type="chains" value="N0/n0=1-172"/>
</dbReference>
<dbReference type="PDB" id="5GAK">
    <property type="method" value="EM"/>
    <property type="resolution" value="3.88 A"/>
    <property type="chains" value="U=1-172"/>
</dbReference>
<dbReference type="PDB" id="5H4P">
    <property type="method" value="EM"/>
    <property type="resolution" value="3.07 A"/>
    <property type="chains" value="S=1-172"/>
</dbReference>
<dbReference type="PDB" id="5I4L">
    <property type="method" value="X-ray"/>
    <property type="resolution" value="3.10 A"/>
    <property type="chains" value="N0/n0=1-172"/>
</dbReference>
<dbReference type="PDB" id="5JCS">
    <property type="method" value="EM"/>
    <property type="resolution" value="9.50 A"/>
    <property type="chains" value="S=1-172"/>
</dbReference>
<dbReference type="PDB" id="5JUO">
    <property type="method" value="EM"/>
    <property type="resolution" value="4.00 A"/>
    <property type="chains" value="X=1-172"/>
</dbReference>
<dbReference type="PDB" id="5JUP">
    <property type="method" value="EM"/>
    <property type="resolution" value="3.50 A"/>
    <property type="chains" value="X=1-172"/>
</dbReference>
<dbReference type="PDB" id="5JUS">
    <property type="method" value="EM"/>
    <property type="resolution" value="4.20 A"/>
    <property type="chains" value="X=1-172"/>
</dbReference>
<dbReference type="PDB" id="5JUT">
    <property type="method" value="EM"/>
    <property type="resolution" value="4.00 A"/>
    <property type="chains" value="X=1-172"/>
</dbReference>
<dbReference type="PDB" id="5JUU">
    <property type="method" value="EM"/>
    <property type="resolution" value="4.00 A"/>
    <property type="chains" value="X=1-172"/>
</dbReference>
<dbReference type="PDB" id="5LYB">
    <property type="method" value="X-ray"/>
    <property type="resolution" value="3.25 A"/>
    <property type="chains" value="N0/n0=1-172"/>
</dbReference>
<dbReference type="PDB" id="5M1J">
    <property type="method" value="EM"/>
    <property type="resolution" value="3.30 A"/>
    <property type="chains" value="S5=1-172"/>
</dbReference>
<dbReference type="PDB" id="5MC6">
    <property type="method" value="EM"/>
    <property type="resolution" value="3.80 A"/>
    <property type="chains" value="BH=1-172"/>
</dbReference>
<dbReference type="PDB" id="5MEI">
    <property type="method" value="X-ray"/>
    <property type="resolution" value="3.50 A"/>
    <property type="chains" value="0/CU=1-172"/>
</dbReference>
<dbReference type="PDB" id="5NDG">
    <property type="method" value="X-ray"/>
    <property type="resolution" value="3.70 A"/>
    <property type="chains" value="N0/n0=1-172"/>
</dbReference>
<dbReference type="PDB" id="5NDV">
    <property type="method" value="X-ray"/>
    <property type="resolution" value="3.30 A"/>
    <property type="chains" value="N0/n0=1-172"/>
</dbReference>
<dbReference type="PDB" id="5NDW">
    <property type="method" value="X-ray"/>
    <property type="resolution" value="3.70 A"/>
    <property type="chains" value="N0/n0=1-172"/>
</dbReference>
<dbReference type="PDB" id="5OBM">
    <property type="method" value="X-ray"/>
    <property type="resolution" value="3.40 A"/>
    <property type="chains" value="N0/n0=1-172"/>
</dbReference>
<dbReference type="PDB" id="5ON6">
    <property type="method" value="X-ray"/>
    <property type="resolution" value="3.10 A"/>
    <property type="chains" value="0/CU=1-172"/>
</dbReference>
<dbReference type="PDB" id="5T62">
    <property type="method" value="EM"/>
    <property type="resolution" value="3.30 A"/>
    <property type="chains" value="f=1-172"/>
</dbReference>
<dbReference type="PDB" id="5T6R">
    <property type="method" value="EM"/>
    <property type="resolution" value="4.50 A"/>
    <property type="chains" value="f=1-172"/>
</dbReference>
<dbReference type="PDB" id="5TBW">
    <property type="method" value="X-ray"/>
    <property type="resolution" value="3.00 A"/>
    <property type="chains" value="0/CU=1-172"/>
</dbReference>
<dbReference type="PDB" id="5TGA">
    <property type="method" value="X-ray"/>
    <property type="resolution" value="3.30 A"/>
    <property type="chains" value="N0/n0=1-172"/>
</dbReference>
<dbReference type="PDB" id="5TGM">
    <property type="method" value="X-ray"/>
    <property type="resolution" value="3.50 A"/>
    <property type="chains" value="N0/n0=1-172"/>
</dbReference>
<dbReference type="PDB" id="5Z3G">
    <property type="method" value="EM"/>
    <property type="resolution" value="3.65 A"/>
    <property type="chains" value="W=1-172"/>
</dbReference>
<dbReference type="PDB" id="6C0F">
    <property type="method" value="EM"/>
    <property type="resolution" value="3.70 A"/>
    <property type="chains" value="S=1-172"/>
</dbReference>
<dbReference type="PDB" id="6CB1">
    <property type="method" value="EM"/>
    <property type="resolution" value="4.60 A"/>
    <property type="chains" value="S=1-172"/>
</dbReference>
<dbReference type="PDB" id="6ELZ">
    <property type="method" value="EM"/>
    <property type="resolution" value="3.30 A"/>
    <property type="chains" value="S=1-172"/>
</dbReference>
<dbReference type="PDB" id="6EM1">
    <property type="method" value="EM"/>
    <property type="resolution" value="3.60 A"/>
    <property type="chains" value="S=1-172"/>
</dbReference>
<dbReference type="PDB" id="6EM3">
    <property type="method" value="EM"/>
    <property type="resolution" value="3.20 A"/>
    <property type="chains" value="S=1-172"/>
</dbReference>
<dbReference type="PDB" id="6EM4">
    <property type="method" value="EM"/>
    <property type="resolution" value="4.10 A"/>
    <property type="chains" value="S=1-172"/>
</dbReference>
<dbReference type="PDB" id="6EM5">
    <property type="method" value="EM"/>
    <property type="resolution" value="4.30 A"/>
    <property type="chains" value="S=1-172"/>
</dbReference>
<dbReference type="PDB" id="6FT6">
    <property type="method" value="EM"/>
    <property type="resolution" value="3.90 A"/>
    <property type="chains" value="S=1-172"/>
</dbReference>
<dbReference type="PDB" id="6GQ1">
    <property type="method" value="EM"/>
    <property type="resolution" value="4.40 A"/>
    <property type="chains" value="S=1-172"/>
</dbReference>
<dbReference type="PDB" id="6GQB">
    <property type="method" value="EM"/>
    <property type="resolution" value="3.90 A"/>
    <property type="chains" value="S=1-172"/>
</dbReference>
<dbReference type="PDB" id="6GQV">
    <property type="method" value="EM"/>
    <property type="resolution" value="4.00 A"/>
    <property type="chains" value="S=1-172"/>
</dbReference>
<dbReference type="PDB" id="6HD7">
    <property type="method" value="EM"/>
    <property type="resolution" value="3.40 A"/>
    <property type="chains" value="U=1-172"/>
</dbReference>
<dbReference type="PDB" id="6HHQ">
    <property type="method" value="X-ray"/>
    <property type="resolution" value="3.10 A"/>
    <property type="chains" value="0/CU=1-172"/>
</dbReference>
<dbReference type="PDB" id="6I7O">
    <property type="method" value="EM"/>
    <property type="resolution" value="5.30 A"/>
    <property type="chains" value="BH/YH=1-172"/>
</dbReference>
<dbReference type="PDB" id="6M62">
    <property type="method" value="EM"/>
    <property type="resolution" value="3.20 A"/>
    <property type="chains" value="S=1-172"/>
</dbReference>
<dbReference type="PDB" id="6N8J">
    <property type="method" value="EM"/>
    <property type="resolution" value="3.50 A"/>
    <property type="chains" value="S=1-172"/>
</dbReference>
<dbReference type="PDB" id="6N8K">
    <property type="method" value="EM"/>
    <property type="resolution" value="3.60 A"/>
    <property type="chains" value="S=1-172"/>
</dbReference>
<dbReference type="PDB" id="6N8L">
    <property type="method" value="EM"/>
    <property type="resolution" value="3.60 A"/>
    <property type="chains" value="S=1-172"/>
</dbReference>
<dbReference type="PDB" id="6N8M">
    <property type="method" value="EM"/>
    <property type="resolution" value="3.50 A"/>
    <property type="chains" value="f=1-172"/>
</dbReference>
<dbReference type="PDB" id="6N8N">
    <property type="method" value="EM"/>
    <property type="resolution" value="3.80 A"/>
    <property type="chains" value="f=1-172"/>
</dbReference>
<dbReference type="PDB" id="6N8O">
    <property type="method" value="EM"/>
    <property type="resolution" value="3.50 A"/>
    <property type="chains" value="f=1-172"/>
</dbReference>
<dbReference type="PDB" id="6OIG">
    <property type="method" value="EM"/>
    <property type="resolution" value="3.80 A"/>
    <property type="chains" value="S=1-172"/>
</dbReference>
<dbReference type="PDB" id="6Q8Y">
    <property type="method" value="EM"/>
    <property type="resolution" value="3.10 A"/>
    <property type="chains" value="BH=1-172"/>
</dbReference>
<dbReference type="PDB" id="6QIK">
    <property type="method" value="EM"/>
    <property type="resolution" value="3.10 A"/>
    <property type="chains" value="S=1-172"/>
</dbReference>
<dbReference type="PDB" id="6QT0">
    <property type="method" value="EM"/>
    <property type="resolution" value="3.40 A"/>
    <property type="chains" value="S=1-172"/>
</dbReference>
<dbReference type="PDB" id="6QTZ">
    <property type="method" value="EM"/>
    <property type="resolution" value="3.50 A"/>
    <property type="chains" value="S=1-172"/>
</dbReference>
<dbReference type="PDB" id="6R84">
    <property type="method" value="EM"/>
    <property type="resolution" value="3.60 A"/>
    <property type="chains" value="U=1-172"/>
</dbReference>
<dbReference type="PDB" id="6R86">
    <property type="method" value="EM"/>
    <property type="resolution" value="3.40 A"/>
    <property type="chains" value="U=1-172"/>
</dbReference>
<dbReference type="PDB" id="6R87">
    <property type="method" value="EM"/>
    <property type="resolution" value="3.40 A"/>
    <property type="chains" value="U=1-172"/>
</dbReference>
<dbReference type="PDB" id="6RI5">
    <property type="method" value="EM"/>
    <property type="resolution" value="3.30 A"/>
    <property type="chains" value="S=1-172"/>
</dbReference>
<dbReference type="PDB" id="6RZZ">
    <property type="method" value="EM"/>
    <property type="resolution" value="3.20 A"/>
    <property type="chains" value="S=1-172"/>
</dbReference>
<dbReference type="PDB" id="6S05">
    <property type="method" value="EM"/>
    <property type="resolution" value="3.90 A"/>
    <property type="chains" value="S=1-172"/>
</dbReference>
<dbReference type="PDB" id="6S47">
    <property type="method" value="EM"/>
    <property type="resolution" value="3.28 A"/>
    <property type="chains" value="AU=1-172"/>
</dbReference>
<dbReference type="PDB" id="6SNT">
    <property type="method" value="EM"/>
    <property type="resolution" value="2.80 A"/>
    <property type="chains" value="y=1-172"/>
</dbReference>
<dbReference type="PDB" id="6SV4">
    <property type="method" value="EM"/>
    <property type="resolution" value="3.30 A"/>
    <property type="chains" value="BH/YH/ZH=1-172"/>
</dbReference>
<dbReference type="PDB" id="6T4Q">
    <property type="method" value="EM"/>
    <property type="resolution" value="2.60 A"/>
    <property type="chains" value="LS=2-172"/>
</dbReference>
<dbReference type="PDB" id="6T7I">
    <property type="method" value="EM"/>
    <property type="resolution" value="3.20 A"/>
    <property type="chains" value="LS=1-172"/>
</dbReference>
<dbReference type="PDB" id="6T7T">
    <property type="method" value="EM"/>
    <property type="resolution" value="3.10 A"/>
    <property type="chains" value="LS=1-172"/>
</dbReference>
<dbReference type="PDB" id="6T83">
    <property type="method" value="EM"/>
    <property type="resolution" value="4.00 A"/>
    <property type="chains" value="D/Sy=1-172"/>
</dbReference>
<dbReference type="PDB" id="6TB3">
    <property type="method" value="EM"/>
    <property type="resolution" value="2.80 A"/>
    <property type="chains" value="BH=2-172"/>
</dbReference>
<dbReference type="PDB" id="6TNU">
    <property type="method" value="EM"/>
    <property type="resolution" value="3.10 A"/>
    <property type="chains" value="BH=2-172"/>
</dbReference>
<dbReference type="PDB" id="6WOO">
    <property type="method" value="EM"/>
    <property type="resolution" value="2.90 A"/>
    <property type="chains" value="S=4-172"/>
</dbReference>
<dbReference type="PDB" id="6XIQ">
    <property type="method" value="EM"/>
    <property type="resolution" value="4.20 A"/>
    <property type="chains" value="S=1-172"/>
</dbReference>
<dbReference type="PDB" id="6XIR">
    <property type="method" value="EM"/>
    <property type="resolution" value="3.20 A"/>
    <property type="chains" value="S=1-172"/>
</dbReference>
<dbReference type="PDB" id="6YLG">
    <property type="method" value="EM"/>
    <property type="resolution" value="3.00 A"/>
    <property type="chains" value="S=1-172"/>
</dbReference>
<dbReference type="PDB" id="6YLH">
    <property type="method" value="EM"/>
    <property type="resolution" value="3.10 A"/>
    <property type="chains" value="S=1-172"/>
</dbReference>
<dbReference type="PDB" id="6YLX">
    <property type="method" value="EM"/>
    <property type="resolution" value="3.90 A"/>
    <property type="chains" value="S=1-172"/>
</dbReference>
<dbReference type="PDB" id="6YLY">
    <property type="method" value="EM"/>
    <property type="resolution" value="3.80 A"/>
    <property type="chains" value="S=1-172"/>
</dbReference>
<dbReference type="PDB" id="6Z6J">
    <property type="method" value="EM"/>
    <property type="resolution" value="3.40 A"/>
    <property type="chains" value="LS=1-172"/>
</dbReference>
<dbReference type="PDB" id="6Z6K">
    <property type="method" value="EM"/>
    <property type="resolution" value="3.40 A"/>
    <property type="chains" value="LS=1-172"/>
</dbReference>
<dbReference type="PDB" id="7AZY">
    <property type="method" value="EM"/>
    <property type="resolution" value="2.88 A"/>
    <property type="chains" value="s=1-172"/>
</dbReference>
<dbReference type="PDB" id="7B7D">
    <property type="method" value="EM"/>
    <property type="resolution" value="3.30 A"/>
    <property type="chains" value="Lo=2-172"/>
</dbReference>
<dbReference type="PDB" id="7BT6">
    <property type="method" value="EM"/>
    <property type="resolution" value="3.12 A"/>
    <property type="chains" value="S=1-172"/>
</dbReference>
<dbReference type="PDB" id="7BTB">
    <property type="method" value="EM"/>
    <property type="resolution" value="3.22 A"/>
    <property type="chains" value="S=1-172"/>
</dbReference>
<dbReference type="PDB" id="7MPI">
    <property type="method" value="EM"/>
    <property type="resolution" value="3.05 A"/>
    <property type="chains" value="AS=1-172"/>
</dbReference>
<dbReference type="PDB" id="7MPJ">
    <property type="method" value="EM"/>
    <property type="resolution" value="2.70 A"/>
    <property type="chains" value="AS=1-172"/>
</dbReference>
<dbReference type="PDB" id="7N8B">
    <property type="method" value="EM"/>
    <property type="resolution" value="3.05 A"/>
    <property type="chains" value="AS=1-172"/>
</dbReference>
<dbReference type="PDB" id="7NAC">
    <property type="method" value="EM"/>
    <property type="resolution" value="3.04 A"/>
    <property type="chains" value="S=1-172"/>
</dbReference>
<dbReference type="PDB" id="7NRC">
    <property type="method" value="EM"/>
    <property type="resolution" value="3.90 A"/>
    <property type="chains" value="LU=2-172"/>
</dbReference>
<dbReference type="PDB" id="7NRD">
    <property type="method" value="EM"/>
    <property type="resolution" value="4.36 A"/>
    <property type="chains" value="LU=2-172"/>
</dbReference>
<dbReference type="PDB" id="7OF1">
    <property type="method" value="EM"/>
    <property type="resolution" value="3.10 A"/>
    <property type="chains" value="S=1-172"/>
</dbReference>
<dbReference type="PDB" id="7OH3">
    <property type="method" value="EM"/>
    <property type="resolution" value="3.40 A"/>
    <property type="chains" value="S=1-172"/>
</dbReference>
<dbReference type="PDB" id="7OHP">
    <property type="method" value="EM"/>
    <property type="resolution" value="3.90 A"/>
    <property type="chains" value="S=1-172"/>
</dbReference>
<dbReference type="PDB" id="7OHQ">
    <property type="method" value="EM"/>
    <property type="resolution" value="3.10 A"/>
    <property type="chains" value="S=1-172"/>
</dbReference>
<dbReference type="PDB" id="7OHR">
    <property type="method" value="EM"/>
    <property type="resolution" value="4.72 A"/>
    <property type="chains" value="S=1-172"/>
</dbReference>
<dbReference type="PDB" id="7OHS">
    <property type="method" value="EM"/>
    <property type="resolution" value="4.38 A"/>
    <property type="chains" value="S=1-172"/>
</dbReference>
<dbReference type="PDB" id="7OHT">
    <property type="method" value="EM"/>
    <property type="resolution" value="4.70 A"/>
    <property type="chains" value="S=1-172"/>
</dbReference>
<dbReference type="PDB" id="7OHU">
    <property type="method" value="EM"/>
    <property type="resolution" value="3.70 A"/>
    <property type="chains" value="S=1-172"/>
</dbReference>
<dbReference type="PDB" id="7OHV">
    <property type="method" value="EM"/>
    <property type="resolution" value="3.90 A"/>
    <property type="chains" value="S=1-172"/>
</dbReference>
<dbReference type="PDB" id="7OHW">
    <property type="method" value="EM"/>
    <property type="resolution" value="3.50 A"/>
    <property type="chains" value="S=1-172"/>
</dbReference>
<dbReference type="PDB" id="7OHX">
    <property type="method" value="EM"/>
    <property type="resolution" value="3.30 A"/>
    <property type="chains" value="S=1-172"/>
</dbReference>
<dbReference type="PDB" id="7OHY">
    <property type="method" value="EM"/>
    <property type="resolution" value="3.90 A"/>
    <property type="chains" value="S=1-172"/>
</dbReference>
<dbReference type="PDB" id="7R7A">
    <property type="method" value="EM"/>
    <property type="resolution" value="3.04 A"/>
    <property type="chains" value="S=1-172"/>
</dbReference>
<dbReference type="PDB" id="7RR5">
    <property type="method" value="EM"/>
    <property type="resolution" value="3.23 A"/>
    <property type="chains" value="LS=1-172"/>
</dbReference>
<dbReference type="PDB" id="7TOO">
    <property type="method" value="EM"/>
    <property type="resolution" value="2.70 A"/>
    <property type="chains" value="AL20=1-172"/>
</dbReference>
<dbReference type="PDB" id="7TOP">
    <property type="method" value="EM"/>
    <property type="resolution" value="2.40 A"/>
    <property type="chains" value="AL20=1-172"/>
</dbReference>
<dbReference type="PDB" id="7U0H">
    <property type="method" value="EM"/>
    <property type="resolution" value="2.76 A"/>
    <property type="chains" value="S=1-172"/>
</dbReference>
<dbReference type="PDB" id="7UG6">
    <property type="method" value="EM"/>
    <property type="resolution" value="2.90 A"/>
    <property type="chains" value="S=1-172"/>
</dbReference>
<dbReference type="PDB" id="7UOO">
    <property type="method" value="EM"/>
    <property type="resolution" value="2.34 A"/>
    <property type="chains" value="S=1-172"/>
</dbReference>
<dbReference type="PDB" id="7UQB">
    <property type="method" value="EM"/>
    <property type="resolution" value="2.43 A"/>
    <property type="chains" value="S=1-172"/>
</dbReference>
<dbReference type="PDB" id="7UQZ">
    <property type="method" value="EM"/>
    <property type="resolution" value="2.44 A"/>
    <property type="chains" value="S=1-172"/>
</dbReference>
<dbReference type="PDB" id="7V08">
    <property type="method" value="EM"/>
    <property type="resolution" value="2.36 A"/>
    <property type="chains" value="S=1-172"/>
</dbReference>
<dbReference type="PDB" id="7Z34">
    <property type="method" value="EM"/>
    <property type="resolution" value="3.80 A"/>
    <property type="chains" value="S=1-172"/>
</dbReference>
<dbReference type="PDB" id="7ZPQ">
    <property type="method" value="EM"/>
    <property type="resolution" value="3.47 A"/>
    <property type="chains" value="BR=2-172"/>
</dbReference>
<dbReference type="PDB" id="7ZRS">
    <property type="method" value="EM"/>
    <property type="resolution" value="4.80 A"/>
    <property type="chains" value="BR=2-172"/>
</dbReference>
<dbReference type="PDB" id="7ZS5">
    <property type="method" value="EM"/>
    <property type="resolution" value="3.20 A"/>
    <property type="chains" value="BT=1-172"/>
</dbReference>
<dbReference type="PDB" id="7ZUW">
    <property type="method" value="EM"/>
    <property type="resolution" value="4.30 A"/>
    <property type="chains" value="BR=2-172"/>
</dbReference>
<dbReference type="PDB" id="7ZUX">
    <property type="method" value="EM"/>
    <property type="resolution" value="2.50 A"/>
    <property type="chains" value="ER=2-172"/>
</dbReference>
<dbReference type="PDB" id="7ZW0">
    <property type="method" value="EM"/>
    <property type="resolution" value="2.40 A"/>
    <property type="chains" value="LV=1-172"/>
</dbReference>
<dbReference type="PDB" id="8AAF">
    <property type="method" value="EM"/>
    <property type="resolution" value="2.50 A"/>
    <property type="chains" value="F=1-172"/>
</dbReference>
<dbReference type="PDB" id="8AGT">
    <property type="method" value="EM"/>
    <property type="resolution" value="2.60 A"/>
    <property type="chains" value="F=1-172"/>
</dbReference>
<dbReference type="PDB" id="8AGU">
    <property type="method" value="EM"/>
    <property type="resolution" value="2.70 A"/>
    <property type="chains" value="F=1-172"/>
</dbReference>
<dbReference type="PDB" id="8AGV">
    <property type="method" value="EM"/>
    <property type="resolution" value="2.60 A"/>
    <property type="chains" value="F=1-172"/>
</dbReference>
<dbReference type="PDB" id="8AGW">
    <property type="method" value="EM"/>
    <property type="resolution" value="2.60 A"/>
    <property type="chains" value="F=1-172"/>
</dbReference>
<dbReference type="PDB" id="8AGX">
    <property type="method" value="EM"/>
    <property type="resolution" value="2.40 A"/>
    <property type="chains" value="F=1-172"/>
</dbReference>
<dbReference type="PDB" id="8AGZ">
    <property type="method" value="EM"/>
    <property type="resolution" value="2.60 A"/>
    <property type="chains" value="F=1-172"/>
</dbReference>
<dbReference type="PDB" id="8BIP">
    <property type="method" value="EM"/>
    <property type="resolution" value="3.10 A"/>
    <property type="chains" value="LS=2-172"/>
</dbReference>
<dbReference type="PDB" id="8BJQ">
    <property type="method" value="EM"/>
    <property type="resolution" value="3.80 A"/>
    <property type="chains" value="LS=2-172"/>
</dbReference>
<dbReference type="PDB" id="8BN3">
    <property type="method" value="EM"/>
    <property type="resolution" value="2.40 A"/>
    <property type="chains" value="N0=1-172"/>
</dbReference>
<dbReference type="PDB" id="8BQD">
    <property type="method" value="EM"/>
    <property type="resolution" value="3.90 A"/>
    <property type="chains" value="BH=2-172"/>
</dbReference>
<dbReference type="PDB" id="8BQX">
    <property type="method" value="EM"/>
    <property type="resolution" value="3.80 A"/>
    <property type="chains" value="BH=2-172"/>
</dbReference>
<dbReference type="PDB" id="8CCS">
    <property type="method" value="EM"/>
    <property type="resolution" value="1.97 A"/>
    <property type="chains" value="E=1-172"/>
</dbReference>
<dbReference type="PDB" id="8CDL">
    <property type="method" value="EM"/>
    <property type="resolution" value="2.72 A"/>
    <property type="chains" value="E=1-172"/>
</dbReference>
<dbReference type="PDB" id="8CDR">
    <property type="method" value="EM"/>
    <property type="resolution" value="2.04 A"/>
    <property type="chains" value="E=1-172"/>
</dbReference>
<dbReference type="PDB" id="8CEH">
    <property type="method" value="EM"/>
    <property type="resolution" value="2.05 A"/>
    <property type="chains" value="E=1-172"/>
</dbReference>
<dbReference type="PDB" id="8CF5">
    <property type="method" value="EM"/>
    <property type="resolution" value="2.71 A"/>
    <property type="chains" value="E=1-172"/>
</dbReference>
<dbReference type="PDB" id="8CG8">
    <property type="method" value="EM"/>
    <property type="resolution" value="2.57 A"/>
    <property type="chains" value="E=1-172"/>
</dbReference>
<dbReference type="PDB" id="8CGN">
    <property type="method" value="EM"/>
    <property type="resolution" value="2.28 A"/>
    <property type="chains" value="E=1-172"/>
</dbReference>
<dbReference type="PDB" id="8CIV">
    <property type="method" value="EM"/>
    <property type="resolution" value="2.47 A"/>
    <property type="chains" value="E=1-172"/>
</dbReference>
<dbReference type="PDB" id="8CKU">
    <property type="method" value="EM"/>
    <property type="resolution" value="3.11 A"/>
    <property type="chains" value="E=1-172"/>
</dbReference>
<dbReference type="PDB" id="8CMJ">
    <property type="method" value="EM"/>
    <property type="resolution" value="3.79 A"/>
    <property type="chains" value="E=1-172"/>
</dbReference>
<dbReference type="PDB" id="8E5T">
    <property type="method" value="EM"/>
    <property type="resolution" value="4.00 A"/>
    <property type="chains" value="S=1-172"/>
</dbReference>
<dbReference type="PDB" id="8HFR">
    <property type="method" value="EM"/>
    <property type="resolution" value="2.64 A"/>
    <property type="chains" value="SZ=1-172"/>
</dbReference>
<dbReference type="PDB" id="8K2D">
    <property type="method" value="EM"/>
    <property type="resolution" value="3.20 A"/>
    <property type="chains" value="LS=1-172"/>
</dbReference>
<dbReference type="PDB" id="8K82">
    <property type="method" value="EM"/>
    <property type="resolution" value="3.00 A"/>
    <property type="chains" value="LS=1-172"/>
</dbReference>
<dbReference type="PDB" id="8P4V">
    <property type="method" value="X-ray"/>
    <property type="resolution" value="3.16 A"/>
    <property type="chains" value="0/CU=1-172"/>
</dbReference>
<dbReference type="PDB" id="8P8M">
    <property type="method" value="EM"/>
    <property type="resolution" value="2.66 A"/>
    <property type="chains" value="QS=1-172"/>
</dbReference>
<dbReference type="PDB" id="8P8N">
    <property type="method" value="EM"/>
    <property type="resolution" value="2.15 A"/>
    <property type="chains" value="QS=1-172"/>
</dbReference>
<dbReference type="PDB" id="8P8U">
    <property type="method" value="EM"/>
    <property type="resolution" value="2.23 A"/>
    <property type="chains" value="QS=1-172"/>
</dbReference>
<dbReference type="PDB" id="8P9A">
    <property type="method" value="X-ray"/>
    <property type="resolution" value="2.90 A"/>
    <property type="chains" value="0/CU=1-172"/>
</dbReference>
<dbReference type="PDB" id="8PFR">
    <property type="method" value="EM"/>
    <property type="resolution" value="2.15 A"/>
    <property type="chains" value="QS=1-172"/>
</dbReference>
<dbReference type="PDB" id="8UT0">
    <property type="method" value="EM"/>
    <property type="resolution" value="3.22 A"/>
    <property type="chains" value="LU=2-172"/>
</dbReference>
<dbReference type="PDB" id="8UTI">
    <property type="method" value="EM"/>
    <property type="resolution" value="3.13 A"/>
    <property type="chains" value="LU=2-172"/>
</dbReference>
<dbReference type="PDB" id="8V83">
    <property type="method" value="EM"/>
    <property type="resolution" value="2.53 A"/>
    <property type="chains" value="S=1-172"/>
</dbReference>
<dbReference type="PDB" id="8V84">
    <property type="method" value="EM"/>
    <property type="resolution" value="2.70 A"/>
    <property type="chains" value="S=1-172"/>
</dbReference>
<dbReference type="PDB" id="8V87">
    <property type="method" value="EM"/>
    <property type="resolution" value="2.66 A"/>
    <property type="chains" value="S=1-172"/>
</dbReference>
<dbReference type="PDB" id="8XU8">
    <property type="method" value="EM"/>
    <property type="resolution" value="3.40 A"/>
    <property type="chains" value="U=2-172"/>
</dbReference>
<dbReference type="PDB" id="8Y0U">
    <property type="method" value="EM"/>
    <property type="resolution" value="3.59 A"/>
    <property type="chains" value="LS=1-172"/>
</dbReference>
<dbReference type="PDB" id="8YLD">
    <property type="method" value="EM"/>
    <property type="resolution" value="3.90 A"/>
    <property type="chains" value="U=2-172"/>
</dbReference>
<dbReference type="PDB" id="8YLR">
    <property type="method" value="EM"/>
    <property type="resolution" value="3.90 A"/>
    <property type="chains" value="U=2-172"/>
</dbReference>
<dbReference type="PDB" id="8Z70">
    <property type="method" value="EM"/>
    <property type="resolution" value="3.20 A"/>
    <property type="chains" value="U=2-172"/>
</dbReference>
<dbReference type="PDB" id="8Z71">
    <property type="method" value="EM"/>
    <property type="resolution" value="3.60 A"/>
    <property type="chains" value="U=2-172"/>
</dbReference>
<dbReference type="PDB" id="9F9S">
    <property type="method" value="EM"/>
    <property type="resolution" value="2.90 A"/>
    <property type="chains" value="LN/MN=1-172"/>
</dbReference>
<dbReference type="PDBsum" id="3J6X"/>
<dbReference type="PDBsum" id="3J6Y"/>
<dbReference type="PDBsum" id="3J77"/>
<dbReference type="PDBsum" id="3J78"/>
<dbReference type="PDBsum" id="3JCT"/>
<dbReference type="PDBsum" id="4U3M"/>
<dbReference type="PDBsum" id="4U3N"/>
<dbReference type="PDBsum" id="4U3U"/>
<dbReference type="PDBsum" id="4U4N"/>
<dbReference type="PDBsum" id="4U4O"/>
<dbReference type="PDBsum" id="4U4Q"/>
<dbReference type="PDBsum" id="4U4R"/>
<dbReference type="PDBsum" id="4U4U"/>
<dbReference type="PDBsum" id="4U4Y"/>
<dbReference type="PDBsum" id="4U4Z"/>
<dbReference type="PDBsum" id="4U50"/>
<dbReference type="PDBsum" id="4U51"/>
<dbReference type="PDBsum" id="4U52"/>
<dbReference type="PDBsum" id="4U53"/>
<dbReference type="PDBsum" id="4U55"/>
<dbReference type="PDBsum" id="4U56"/>
<dbReference type="PDBsum" id="4U6F"/>
<dbReference type="PDBsum" id="4V7F"/>
<dbReference type="PDBsum" id="4V88"/>
<dbReference type="PDBsum" id="4V8T"/>
<dbReference type="PDBsum" id="4V91"/>
<dbReference type="PDBsum" id="5APN"/>
<dbReference type="PDBsum" id="5APO"/>
<dbReference type="PDBsum" id="5DAT"/>
<dbReference type="PDBsum" id="5DC3"/>
<dbReference type="PDBsum" id="5DGE"/>
<dbReference type="PDBsum" id="5DGF"/>
<dbReference type="PDBsum" id="5DGV"/>
<dbReference type="PDBsum" id="5FCI"/>
<dbReference type="PDBsum" id="5FCJ"/>
<dbReference type="PDBsum" id="5GAK"/>
<dbReference type="PDBsum" id="5H4P"/>
<dbReference type="PDBsum" id="5I4L"/>
<dbReference type="PDBsum" id="5JCS"/>
<dbReference type="PDBsum" id="5JUO"/>
<dbReference type="PDBsum" id="5JUP"/>
<dbReference type="PDBsum" id="5JUS"/>
<dbReference type="PDBsum" id="5JUT"/>
<dbReference type="PDBsum" id="5JUU"/>
<dbReference type="PDBsum" id="5LYB"/>
<dbReference type="PDBsum" id="5M1J"/>
<dbReference type="PDBsum" id="5MC6"/>
<dbReference type="PDBsum" id="5MEI"/>
<dbReference type="PDBsum" id="5NDG"/>
<dbReference type="PDBsum" id="5NDV"/>
<dbReference type="PDBsum" id="5NDW"/>
<dbReference type="PDBsum" id="5OBM"/>
<dbReference type="PDBsum" id="5ON6"/>
<dbReference type="PDBsum" id="5T62"/>
<dbReference type="PDBsum" id="5T6R"/>
<dbReference type="PDBsum" id="5TBW"/>
<dbReference type="PDBsum" id="5TGA"/>
<dbReference type="PDBsum" id="5TGM"/>
<dbReference type="PDBsum" id="5Z3G"/>
<dbReference type="PDBsum" id="6C0F"/>
<dbReference type="PDBsum" id="6CB1"/>
<dbReference type="PDBsum" id="6ELZ"/>
<dbReference type="PDBsum" id="6EM1"/>
<dbReference type="PDBsum" id="6EM3"/>
<dbReference type="PDBsum" id="6EM4"/>
<dbReference type="PDBsum" id="6EM5"/>
<dbReference type="PDBsum" id="6FT6"/>
<dbReference type="PDBsum" id="6GQ1"/>
<dbReference type="PDBsum" id="6GQB"/>
<dbReference type="PDBsum" id="6GQV"/>
<dbReference type="PDBsum" id="6HD7"/>
<dbReference type="PDBsum" id="6HHQ"/>
<dbReference type="PDBsum" id="6I7O"/>
<dbReference type="PDBsum" id="6M62"/>
<dbReference type="PDBsum" id="6N8J"/>
<dbReference type="PDBsum" id="6N8K"/>
<dbReference type="PDBsum" id="6N8L"/>
<dbReference type="PDBsum" id="6N8M"/>
<dbReference type="PDBsum" id="6N8N"/>
<dbReference type="PDBsum" id="6N8O"/>
<dbReference type="PDBsum" id="6OIG"/>
<dbReference type="PDBsum" id="6Q8Y"/>
<dbReference type="PDBsum" id="6QIK"/>
<dbReference type="PDBsum" id="6QT0"/>
<dbReference type="PDBsum" id="6QTZ"/>
<dbReference type="PDBsum" id="6R84"/>
<dbReference type="PDBsum" id="6R86"/>
<dbReference type="PDBsum" id="6R87"/>
<dbReference type="PDBsum" id="6RI5"/>
<dbReference type="PDBsum" id="6RZZ"/>
<dbReference type="PDBsum" id="6S05"/>
<dbReference type="PDBsum" id="6S47"/>
<dbReference type="PDBsum" id="6SNT"/>
<dbReference type="PDBsum" id="6SV4"/>
<dbReference type="PDBsum" id="6T4Q"/>
<dbReference type="PDBsum" id="6T7I"/>
<dbReference type="PDBsum" id="6T7T"/>
<dbReference type="PDBsum" id="6T83"/>
<dbReference type="PDBsum" id="6TB3"/>
<dbReference type="PDBsum" id="6TNU"/>
<dbReference type="PDBsum" id="6WOO"/>
<dbReference type="PDBsum" id="6XIQ"/>
<dbReference type="PDBsum" id="6XIR"/>
<dbReference type="PDBsum" id="6YLG"/>
<dbReference type="PDBsum" id="6YLH"/>
<dbReference type="PDBsum" id="6YLX"/>
<dbReference type="PDBsum" id="6YLY"/>
<dbReference type="PDBsum" id="6Z6J"/>
<dbReference type="PDBsum" id="6Z6K"/>
<dbReference type="PDBsum" id="7AZY"/>
<dbReference type="PDBsum" id="7B7D"/>
<dbReference type="PDBsum" id="7BT6"/>
<dbReference type="PDBsum" id="7BTB"/>
<dbReference type="PDBsum" id="7MPI"/>
<dbReference type="PDBsum" id="7MPJ"/>
<dbReference type="PDBsum" id="7N8B"/>
<dbReference type="PDBsum" id="7NAC"/>
<dbReference type="PDBsum" id="7NRC"/>
<dbReference type="PDBsum" id="7NRD"/>
<dbReference type="PDBsum" id="7OF1"/>
<dbReference type="PDBsum" id="7OH3"/>
<dbReference type="PDBsum" id="7OHP"/>
<dbReference type="PDBsum" id="7OHQ"/>
<dbReference type="PDBsum" id="7OHR"/>
<dbReference type="PDBsum" id="7OHS"/>
<dbReference type="PDBsum" id="7OHT"/>
<dbReference type="PDBsum" id="7OHU"/>
<dbReference type="PDBsum" id="7OHV"/>
<dbReference type="PDBsum" id="7OHW"/>
<dbReference type="PDBsum" id="7OHX"/>
<dbReference type="PDBsum" id="7OHY"/>
<dbReference type="PDBsum" id="7R7A"/>
<dbReference type="PDBsum" id="7RR5"/>
<dbReference type="PDBsum" id="7TOO"/>
<dbReference type="PDBsum" id="7TOP"/>
<dbReference type="PDBsum" id="7U0H"/>
<dbReference type="PDBsum" id="7UG6"/>
<dbReference type="PDBsum" id="7UOO"/>
<dbReference type="PDBsum" id="7UQB"/>
<dbReference type="PDBsum" id="7UQZ"/>
<dbReference type="PDBsum" id="7V08"/>
<dbReference type="PDBsum" id="7Z34"/>
<dbReference type="PDBsum" id="7ZPQ"/>
<dbReference type="PDBsum" id="7ZRS"/>
<dbReference type="PDBsum" id="7ZS5"/>
<dbReference type="PDBsum" id="7ZUW"/>
<dbReference type="PDBsum" id="7ZUX"/>
<dbReference type="PDBsum" id="7ZW0"/>
<dbReference type="PDBsum" id="8AAF"/>
<dbReference type="PDBsum" id="8AGT"/>
<dbReference type="PDBsum" id="8AGU"/>
<dbReference type="PDBsum" id="8AGV"/>
<dbReference type="PDBsum" id="8AGW"/>
<dbReference type="PDBsum" id="8AGX"/>
<dbReference type="PDBsum" id="8AGZ"/>
<dbReference type="PDBsum" id="8BIP"/>
<dbReference type="PDBsum" id="8BJQ"/>
<dbReference type="PDBsum" id="8BN3"/>
<dbReference type="PDBsum" id="8BQD"/>
<dbReference type="PDBsum" id="8BQX"/>
<dbReference type="PDBsum" id="8CCS"/>
<dbReference type="PDBsum" id="8CDL"/>
<dbReference type="PDBsum" id="8CDR"/>
<dbReference type="PDBsum" id="8CEH"/>
<dbReference type="PDBsum" id="8CF5"/>
<dbReference type="PDBsum" id="8CG8"/>
<dbReference type="PDBsum" id="8CGN"/>
<dbReference type="PDBsum" id="8CIV"/>
<dbReference type="PDBsum" id="8CKU"/>
<dbReference type="PDBsum" id="8CMJ"/>
<dbReference type="PDBsum" id="8E5T"/>
<dbReference type="PDBsum" id="8HFR"/>
<dbReference type="PDBsum" id="8K2D"/>
<dbReference type="PDBsum" id="8K82"/>
<dbReference type="PDBsum" id="8P4V"/>
<dbReference type="PDBsum" id="8P8M"/>
<dbReference type="PDBsum" id="8P8N"/>
<dbReference type="PDBsum" id="8P8U"/>
<dbReference type="PDBsum" id="8P9A"/>
<dbReference type="PDBsum" id="8PFR"/>
<dbReference type="PDBsum" id="8UT0"/>
<dbReference type="PDBsum" id="8UTI"/>
<dbReference type="PDBsum" id="8V83"/>
<dbReference type="PDBsum" id="8V84"/>
<dbReference type="PDBsum" id="8V87"/>
<dbReference type="PDBsum" id="8XU8"/>
<dbReference type="PDBsum" id="8Y0U"/>
<dbReference type="PDBsum" id="8YLD"/>
<dbReference type="PDBsum" id="8YLR"/>
<dbReference type="PDBsum" id="8Z70"/>
<dbReference type="PDBsum" id="8Z71"/>
<dbReference type="PDBsum" id="9F9S"/>
<dbReference type="EMDB" id="EMD-0047"/>
<dbReference type="EMDB" id="EMD-0048"/>
<dbReference type="EMDB" id="EMD-0049"/>
<dbReference type="EMDB" id="EMD-0202"/>
<dbReference type="EMDB" id="EMD-0369"/>
<dbReference type="EMDB" id="EMD-0370"/>
<dbReference type="EMDB" id="EMD-0371"/>
<dbReference type="EMDB" id="EMD-0372"/>
<dbReference type="EMDB" id="EMD-0373"/>
<dbReference type="EMDB" id="EMD-0374"/>
<dbReference type="EMDB" id="EMD-10068"/>
<dbReference type="EMDB" id="EMD-10071"/>
<dbReference type="EMDB" id="EMD-10098"/>
<dbReference type="EMDB" id="EMD-10262"/>
<dbReference type="EMDB" id="EMD-10315"/>
<dbReference type="EMDB" id="EMD-10377"/>
<dbReference type="EMDB" id="EMD-10396"/>
<dbReference type="EMDB" id="EMD-10397"/>
<dbReference type="EMDB" id="EMD-10398"/>
<dbReference type="EMDB" id="EMD-10431"/>
<dbReference type="EMDB" id="EMD-10537"/>
<dbReference type="EMDB" id="EMD-10838"/>
<dbReference type="EMDB" id="EMD-10839"/>
<dbReference type="EMDB" id="EMD-10841"/>
<dbReference type="EMDB" id="EMD-10842"/>
<dbReference type="EMDB" id="EMD-11096"/>
<dbReference type="EMDB" id="EMD-11097"/>
<dbReference type="EMDB" id="EMD-11951"/>
<dbReference type="EMDB" id="EMD-12081"/>
<dbReference type="EMDB" id="EMD-12534"/>
<dbReference type="EMDB" id="EMD-12535"/>
<dbReference type="EMDB" id="EMD-12866"/>
<dbReference type="EMDB" id="EMD-12892"/>
<dbReference type="EMDB" id="EMD-12904"/>
<dbReference type="EMDB" id="EMD-12905"/>
<dbReference type="EMDB" id="EMD-12906"/>
<dbReference type="EMDB" id="EMD-12907"/>
<dbReference type="EMDB" id="EMD-12908"/>
<dbReference type="EMDB" id="EMD-12909"/>
<dbReference type="EMDB" id="EMD-12910"/>
<dbReference type="EMDB" id="EMD-12911"/>
<dbReference type="EMDB" id="EMD-12912"/>
<dbReference type="EMDB" id="EMD-12913"/>
<dbReference type="EMDB" id="EMD-14471"/>
<dbReference type="EMDB" id="EMD-14861"/>
<dbReference type="EMDB" id="EMD-14921"/>
<dbReference type="EMDB" id="EMD-14926"/>
<dbReference type="EMDB" id="EMD-14978"/>
<dbReference type="EMDB" id="EMD-14979"/>
<dbReference type="EMDB" id="EMD-14990"/>
<dbReference type="EMDB" id="EMD-15296"/>
<dbReference type="EMDB" id="EMD-15423"/>
<dbReference type="EMDB" id="EMD-15424"/>
<dbReference type="EMDB" id="EMD-15425"/>
<dbReference type="EMDB" id="EMD-15426"/>
<dbReference type="EMDB" id="EMD-15427"/>
<dbReference type="EMDB" id="EMD-15428"/>
<dbReference type="EMDB" id="EMD-16086"/>
<dbReference type="EMDB" id="EMD-16090"/>
<dbReference type="EMDB" id="EMD-16127"/>
<dbReference type="EMDB" id="EMD-16182"/>
<dbReference type="EMDB" id="EMD-16191"/>
<dbReference type="EMDB" id="EMD-16563"/>
<dbReference type="EMDB" id="EMD-16591"/>
<dbReference type="EMDB" id="EMD-16594"/>
<dbReference type="EMDB" id="EMD-16609"/>
<dbReference type="EMDB" id="EMD-16616"/>
<dbReference type="EMDB" id="EMD-16634"/>
<dbReference type="EMDB" id="EMD-16648"/>
<dbReference type="EMDB" id="EMD-16684"/>
<dbReference type="EMDB" id="EMD-16702"/>
<dbReference type="EMDB" id="EMD-16729"/>
<dbReference type="EMDB" id="EMD-17549"/>
<dbReference type="EMDB" id="EMD-17550"/>
<dbReference type="EMDB" id="EMD-17552"/>
<dbReference type="EMDB" id="EMD-17653"/>
<dbReference type="EMDB" id="EMD-20077"/>
<dbReference type="EMDB" id="EMD-21859"/>
<dbReference type="EMDB" id="EMD-22196"/>
<dbReference type="EMDB" id="EMD-22198"/>
<dbReference type="EMDB" id="EMD-23934"/>
<dbReference type="EMDB" id="EMD-23935"/>
<dbReference type="EMDB" id="EMD-24235"/>
<dbReference type="EMDB" id="EMD-24269"/>
<dbReference type="EMDB" id="EMD-24296"/>
<dbReference type="EMDB" id="EMD-24652"/>
<dbReference type="EMDB" id="EMD-26033"/>
<dbReference type="EMDB" id="EMD-26034"/>
<dbReference type="EMDB" id="EMD-26259"/>
<dbReference type="EMDB" id="EMD-26485"/>
<dbReference type="EMDB" id="EMD-26651"/>
<dbReference type="EMDB" id="EMD-26686"/>
<dbReference type="EMDB" id="EMD-26703"/>
<dbReference type="EMDB" id="EMD-26941"/>
<dbReference type="EMDB" id="EMD-27919"/>
<dbReference type="EMDB" id="EMD-30108"/>
<dbReference type="EMDB" id="EMD-30170"/>
<dbReference type="EMDB" id="EMD-30174"/>
<dbReference type="EMDB" id="EMD-3461"/>
<dbReference type="EMDB" id="EMD-34725"/>
<dbReference type="EMDB" id="EMD-36839"/>
<dbReference type="EMDB" id="EMD-36945"/>
<dbReference type="EMDB" id="EMD-38660"/>
<dbReference type="EMDB" id="EMD-4140"/>
<dbReference type="EMDB" id="EMD-42525"/>
<dbReference type="EMDB" id="EMD-42540"/>
<dbReference type="EMDB" id="EMD-43017"/>
<dbReference type="EMDB" id="EMD-4302"/>
<dbReference type="EMDB" id="EMD-43021"/>
<dbReference type="EMDB" id="EMD-43027"/>
<dbReference type="EMDB" id="EMD-4427"/>
<dbReference type="EMDB" id="EMD-4474"/>
<dbReference type="EMDB" id="EMD-4560"/>
<dbReference type="EMDB" id="EMD-4630"/>
<dbReference type="EMDB" id="EMD-4636"/>
<dbReference type="EMDB" id="EMD-4751"/>
<dbReference type="EMDB" id="EMD-4752"/>
<dbReference type="EMDB" id="EMD-4753"/>
<dbReference type="EMDB" id="EMD-4884"/>
<dbReference type="EMDB" id="EMD-50259"/>
<dbReference type="EMDB" id="EMD-6878"/>
<dbReference type="EMDB" id="EMD-7324"/>
<dbReference type="EMDB" id="EMD-8362"/>
<dbReference type="EMDB" id="EMD-8368"/>
<dbReference type="SMR" id="P0CX23"/>
<dbReference type="BioGRID" id="34700">
    <property type="interactions" value="272"/>
</dbReference>
<dbReference type="BioGRID" id="35421">
    <property type="interactions" value="277"/>
</dbReference>
<dbReference type="ComplexPortal" id="CPX-1601">
    <property type="entry name" value="60S cytosolic large ribosomal subunit"/>
</dbReference>
<dbReference type="FunCoup" id="P0CX23">
    <property type="interactions" value="1686"/>
</dbReference>
<dbReference type="IntAct" id="P0CX23">
    <property type="interactions" value="64"/>
</dbReference>
<dbReference type="MINT" id="P0CX23"/>
<dbReference type="STRING" id="4932.YMR242C"/>
<dbReference type="CarbonylDB" id="P0CX23"/>
<dbReference type="iPTMnet" id="P0CX23"/>
<dbReference type="PaxDb" id="4932-YMR242C"/>
<dbReference type="PeptideAtlas" id="P0CX23"/>
<dbReference type="TopDownProteomics" id="P0CX23"/>
<dbReference type="GeneID" id="855283"/>
<dbReference type="KEGG" id="sce:YMR242C"/>
<dbReference type="KEGG" id="sce:YOR312C"/>
<dbReference type="AGR" id="SGD:S000004855"/>
<dbReference type="SGD" id="S000004855">
    <property type="gene designation" value="RPL20A"/>
</dbReference>
<dbReference type="VEuPathDB" id="FungiDB:YMR242C"/>
<dbReference type="VEuPathDB" id="FungiDB:YOR312C"/>
<dbReference type="eggNOG" id="KOG0829">
    <property type="taxonomic scope" value="Eukaryota"/>
</dbReference>
<dbReference type="HOGENOM" id="CLU_080773_1_1_1"/>
<dbReference type="InParanoid" id="P0CX23"/>
<dbReference type="OrthoDB" id="1294322at2759"/>
<dbReference type="BioCyc" id="YEAST:G3O-32922-MONOMER"/>
<dbReference type="Reactome" id="R-SCE-156827">
    <property type="pathway name" value="L13a-mediated translational silencing of Ceruloplasmin expression"/>
</dbReference>
<dbReference type="Reactome" id="R-SCE-1799339">
    <property type="pathway name" value="SRP-dependent cotranslational protein targeting to membrane"/>
</dbReference>
<dbReference type="Reactome" id="R-SCE-72689">
    <property type="pathway name" value="Formation of a pool of free 40S subunits"/>
</dbReference>
<dbReference type="Reactome" id="R-SCE-72706">
    <property type="pathway name" value="GTP hydrolysis and joining of the 60S ribosomal subunit"/>
</dbReference>
<dbReference type="Reactome" id="R-SCE-975956">
    <property type="pathway name" value="Nonsense Mediated Decay (NMD) independent of the Exon Junction Complex (EJC)"/>
</dbReference>
<dbReference type="Reactome" id="R-SCE-975957">
    <property type="pathway name" value="Nonsense Mediated Decay (NMD) enhanced by the Exon Junction Complex (EJC)"/>
</dbReference>
<dbReference type="BioGRID-ORCS" id="854489">
    <property type="hits" value="0 hits in 10 CRISPR screens"/>
</dbReference>
<dbReference type="BioGRID-ORCS" id="855283">
    <property type="hits" value="2 hits in 10 CRISPR screens"/>
</dbReference>
<dbReference type="PRO" id="PR:P0CX23"/>
<dbReference type="Proteomes" id="UP000002311">
    <property type="component" value="Chromosome XIII"/>
</dbReference>
<dbReference type="RNAct" id="P0CX23">
    <property type="molecule type" value="protein"/>
</dbReference>
<dbReference type="GO" id="GO:0005829">
    <property type="term" value="C:cytosol"/>
    <property type="evidence" value="ECO:0000304"/>
    <property type="project" value="Reactome"/>
</dbReference>
<dbReference type="GO" id="GO:0022625">
    <property type="term" value="C:cytosolic large ribosomal subunit"/>
    <property type="evidence" value="ECO:0000314"/>
    <property type="project" value="SGD"/>
</dbReference>
<dbReference type="GO" id="GO:0003735">
    <property type="term" value="F:structural constituent of ribosome"/>
    <property type="evidence" value="ECO:0000318"/>
    <property type="project" value="GO_Central"/>
</dbReference>
<dbReference type="GO" id="GO:0002181">
    <property type="term" value="P:cytoplasmic translation"/>
    <property type="evidence" value="ECO:0000318"/>
    <property type="project" value="GO_Central"/>
</dbReference>
<dbReference type="FunFam" id="3.10.20.10:FF:000001">
    <property type="entry name" value="60S ribosomal protein L18a"/>
    <property type="match status" value="1"/>
</dbReference>
<dbReference type="FunFam" id="3.10.20.10:FF:000002">
    <property type="entry name" value="60S ribosomal protein L18a"/>
    <property type="match status" value="1"/>
</dbReference>
<dbReference type="Gene3D" id="3.10.20.10">
    <property type="match status" value="2"/>
</dbReference>
<dbReference type="HAMAP" id="MF_00273">
    <property type="entry name" value="Ribosomal_eL20"/>
    <property type="match status" value="1"/>
</dbReference>
<dbReference type="InterPro" id="IPR028877">
    <property type="entry name" value="Ribosomal_eL20"/>
</dbReference>
<dbReference type="InterPro" id="IPR023573">
    <property type="entry name" value="Ribosomal_eL20_dom"/>
</dbReference>
<dbReference type="InterPro" id="IPR021138">
    <property type="entry name" value="Ribosomal_eL20_eukaryotes"/>
</dbReference>
<dbReference type="PANTHER" id="PTHR10052">
    <property type="entry name" value="60S RIBOSOMAL PROTEIN L18A"/>
    <property type="match status" value="1"/>
</dbReference>
<dbReference type="Pfam" id="PF01775">
    <property type="entry name" value="Ribosomal_L18A"/>
    <property type="match status" value="1"/>
</dbReference>
<dbReference type="PIRSF" id="PIRSF002190">
    <property type="entry name" value="Ribosomal_L18a"/>
    <property type="match status" value="1"/>
</dbReference>
<dbReference type="SUPFAM" id="SSF160374">
    <property type="entry name" value="RplX-like"/>
    <property type="match status" value="1"/>
</dbReference>
<evidence type="ECO:0000269" key="1">
    <source>
    </source>
</evidence>
<evidence type="ECO:0000269" key="2">
    <source>
    </source>
</evidence>
<evidence type="ECO:0000269" key="3">
    <source>
    </source>
</evidence>
<evidence type="ECO:0000303" key="4">
    <source>
    </source>
</evidence>
<evidence type="ECO:0000303" key="5">
    <source>
    </source>
</evidence>
<evidence type="ECO:0000305" key="6"/>
<evidence type="ECO:0000305" key="7">
    <source>
    </source>
</evidence>
<evidence type="ECO:0000305" key="8">
    <source>
    </source>
</evidence>
<evidence type="ECO:0007744" key="9">
    <source>
    </source>
</evidence>
<evidence type="ECO:0007744" key="10">
    <source>
    </source>
</evidence>
<evidence type="ECO:0007829" key="11">
    <source>
        <dbReference type="PDB" id="6EM3"/>
    </source>
</evidence>
<sequence length="172" mass="20437">MAHFKEYQVIGRRLPTESVPEPKLFRMRIFASNEVIAKSRYWYFLQKLHKVKKASGEIVSINQINEAHPTKVKNFGVWVRYDSRSGTHNMYKEIRDVSRVAAVETLYQDMAARHRARFRSIHILKVAEIEKTADVKRQYVKQFLTKDLKFPLPHRVQKSTKTFSYKRPSTFY</sequence>
<protein>
    <recommendedName>
        <fullName evidence="4">Large ribosomal subunit protein eL20A</fullName>
    </recommendedName>
    <alternativeName>
        <fullName evidence="5">60S ribosomal protein L20-A</fullName>
    </alternativeName>
    <alternativeName>
        <fullName>L18a</fullName>
    </alternativeName>
</protein>
<accession>P0CX23</accession>
<accession>A1YV95</accession>
<accession>A1YV96</accession>
<accession>D6W068</accession>
<accession>P0C2I0</accession>
<accession>P0C2I1</accession>
<accession>P47913</accession>
<name>RL20A_YEAST</name>
<comment type="function">
    <text evidence="7">Component of the ribosome, a large ribonucleoprotein complex responsible for the synthesis of proteins in the cell. The small ribosomal subunit (SSU) binds messenger RNAs (mRNAs) and translates the encoded message by selecting cognate aminoacyl-transfer RNA (tRNA) molecules. The large subunit (LSU) contains the ribosomal catalytic site termed the peptidyl transferase center (PTC), which catalyzes the formation of peptide bonds, thereby polymerizing the amino acids delivered by tRNAs into a polypeptide chain. The nascent polypeptides leave the ribosome through a tunnel in the LSU and interact with protein factors that function in enzymatic processing, targeting, and the membrane insertion of nascent chains at the exit of the ribosomal tunnel.</text>
</comment>
<comment type="subunit">
    <text evidence="3 8">Component of the large ribosomal subunit (LSU). Mature yeast ribosomes consist of a small (40S) and a large (60S) subunit. The 40S small subunit contains 1 molecule of ribosomal RNA (18S rRNA) and 33 different proteins (encoded by 57 genes). The large 60S subunit contains 3 rRNA molecules (25S, 5.8S and 5S rRNA) and 46 different proteins (encoded by 81 genes). eL20 forms multiple interactions with RNA and proteins in the central protuberance, connecting components of core functional centers that are located far apart (PubMed:22096102, PubMed:9559554).</text>
</comment>
<comment type="subcellular location">
    <subcellularLocation>
        <location evidence="1 3">Cytoplasm</location>
    </subcellularLocation>
</comment>
<comment type="miscellaneous">
    <text evidence="2">Present with 54300 molecules/cell in log phase SD medium.</text>
</comment>
<comment type="miscellaneous">
    <text evidence="6">There are 2 genes for eL20 in yeast.</text>
</comment>
<comment type="similarity">
    <text evidence="6">Belongs to the eukaryotic ribosomal protein eL20 family.</text>
</comment>
<comment type="sequence caution" evidence="6">
    <conflict type="erroneous gene model prediction">
        <sequence resource="EMBL-CDS" id="CAA88652"/>
    </conflict>
</comment>
<organism>
    <name type="scientific">Saccharomyces cerevisiae (strain ATCC 204508 / S288c)</name>
    <name type="common">Baker's yeast</name>
    <dbReference type="NCBI Taxonomy" id="559292"/>
    <lineage>
        <taxon>Eukaryota</taxon>
        <taxon>Fungi</taxon>
        <taxon>Dikarya</taxon>
        <taxon>Ascomycota</taxon>
        <taxon>Saccharomycotina</taxon>
        <taxon>Saccharomycetes</taxon>
        <taxon>Saccharomycetales</taxon>
        <taxon>Saccharomycetaceae</taxon>
        <taxon>Saccharomyces</taxon>
    </lineage>
</organism>
<proteinExistence type="evidence at protein level"/>
<reference key="1">
    <citation type="journal article" date="1997" name="Nature">
        <title>The nucleotide sequence of Saccharomyces cerevisiae chromosome XIII.</title>
        <authorList>
            <person name="Bowman S."/>
            <person name="Churcher C.M."/>
            <person name="Badcock K."/>
            <person name="Brown D."/>
            <person name="Chillingworth T."/>
            <person name="Connor R."/>
            <person name="Dedman K."/>
            <person name="Devlin K."/>
            <person name="Gentles S."/>
            <person name="Hamlin N."/>
            <person name="Hunt S."/>
            <person name="Jagels K."/>
            <person name="Lye G."/>
            <person name="Moule S."/>
            <person name="Odell C."/>
            <person name="Pearson D."/>
            <person name="Rajandream M.A."/>
            <person name="Rice P."/>
            <person name="Skelton J."/>
            <person name="Walsh S.V."/>
            <person name="Whitehead S."/>
            <person name="Barrell B.G."/>
        </authorList>
    </citation>
    <scope>NUCLEOTIDE SEQUENCE [LARGE SCALE GENOMIC DNA]</scope>
    <source>
        <strain>ATCC 204508 / S288c</strain>
    </source>
</reference>
<reference key="2">
    <citation type="journal article" date="2014" name="G3 (Bethesda)">
        <title>The reference genome sequence of Saccharomyces cerevisiae: Then and now.</title>
        <authorList>
            <person name="Engel S.R."/>
            <person name="Dietrich F.S."/>
            <person name="Fisk D.G."/>
            <person name="Binkley G."/>
            <person name="Balakrishnan R."/>
            <person name="Costanzo M.C."/>
            <person name="Dwight S.S."/>
            <person name="Hitz B.C."/>
            <person name="Karra K."/>
            <person name="Nash R.S."/>
            <person name="Weng S."/>
            <person name="Wong E.D."/>
            <person name="Lloyd P."/>
            <person name="Skrzypek M.S."/>
            <person name="Miyasato S.R."/>
            <person name="Simison M."/>
            <person name="Cherry J.M."/>
        </authorList>
    </citation>
    <scope>GENOME REANNOTATION</scope>
    <source>
        <strain>ATCC 204508 / S288c</strain>
    </source>
</reference>
<reference key="3">
    <citation type="journal article" date="2007" name="Genome Res.">
        <title>Genome-wide identification of spliced introns using a tiling microarray.</title>
        <authorList>
            <person name="Zhang Z."/>
            <person name="Hesselberth J.R."/>
            <person name="Fields S."/>
        </authorList>
    </citation>
    <scope>NUCLEOTIDE SEQUENCE [MRNA] OF 1-105</scope>
    <source>
        <strain>ATCC 201390 / BY4743</strain>
    </source>
</reference>
<reference key="4">
    <citation type="journal article" date="1998" name="Yeast">
        <title>The list of cytoplasmic ribosomal proteins of Saccharomyces cerevisiae.</title>
        <authorList>
            <person name="Planta R.J."/>
            <person name="Mager W.H."/>
        </authorList>
    </citation>
    <scope>NOMENCLATURE</scope>
    <scope>SUBUNIT</scope>
</reference>
<reference key="5">
    <citation type="journal article" date="2003" name="Nature">
        <title>Global analysis of protein localization in budding yeast.</title>
        <authorList>
            <person name="Huh W.-K."/>
            <person name="Falvo J.V."/>
            <person name="Gerke L.C."/>
            <person name="Carroll A.S."/>
            <person name="Howson R.W."/>
            <person name="Weissman J.S."/>
            <person name="O'Shea E.K."/>
        </authorList>
    </citation>
    <scope>SUBCELLULAR LOCATION [LARGE SCALE ANALYSIS]</scope>
</reference>
<reference key="6">
    <citation type="journal article" date="2003" name="Nature">
        <title>Global analysis of protein expression in yeast.</title>
        <authorList>
            <person name="Ghaemmaghami S."/>
            <person name="Huh W.-K."/>
            <person name="Bower K."/>
            <person name="Howson R.W."/>
            <person name="Belle A."/>
            <person name="Dephoure N."/>
            <person name="O'Shea E.K."/>
            <person name="Weissman J.S."/>
        </authorList>
    </citation>
    <scope>LEVEL OF PROTEIN EXPRESSION [LARGE SCALE ANALYSIS]</scope>
</reference>
<reference key="7">
    <citation type="journal article" date="2006" name="Proc. Natl. Acad. Sci. U.S.A.">
        <title>A large-scale full-length cDNA analysis to explore the budding yeast transcriptome.</title>
        <authorList>
            <person name="Miura F."/>
            <person name="Kawaguchi N."/>
            <person name="Sese J."/>
            <person name="Toyoda A."/>
            <person name="Hattori M."/>
            <person name="Morishita S."/>
            <person name="Ito T."/>
        </authorList>
    </citation>
    <scope>IDENTIFICATION OF INTRON</scope>
</reference>
<reference key="8">
    <citation type="journal article" date="2007" name="Proc. Natl. Acad. Sci. U.S.A.">
        <title>Analysis of phosphorylation sites on proteins from Saccharomyces cerevisiae by electron transfer dissociation (ETD) mass spectrometry.</title>
        <authorList>
            <person name="Chi A."/>
            <person name="Huttenhower C."/>
            <person name="Geer L.Y."/>
            <person name="Coon J.J."/>
            <person name="Syka J.E.P."/>
            <person name="Bai D.L."/>
            <person name="Shabanowitz J."/>
            <person name="Burke D.J."/>
            <person name="Troyanskaya O.G."/>
            <person name="Hunt D.F."/>
        </authorList>
    </citation>
    <scope>PHOSPHORYLATION [LARGE SCALE ANALYSIS] AT SER-32</scope>
    <scope>IDENTIFICATION BY MASS SPECTROMETRY [LARGE SCALE ANALYSIS]</scope>
</reference>
<reference key="9">
    <citation type="journal article" date="2012" name="Proc. Natl. Acad. Sci. U.S.A.">
        <title>N-terminal acetylome analyses and functional insights of the N-terminal acetyltransferase NatB.</title>
        <authorList>
            <person name="Van Damme P."/>
            <person name="Lasa M."/>
            <person name="Polevoda B."/>
            <person name="Gazquez C."/>
            <person name="Elosegui-Artola A."/>
            <person name="Kim D.S."/>
            <person name="De Juan-Pardo E."/>
            <person name="Demeyer K."/>
            <person name="Hole K."/>
            <person name="Larrea E."/>
            <person name="Timmerman E."/>
            <person name="Prieto J."/>
            <person name="Arnesen T."/>
            <person name="Sherman F."/>
            <person name="Gevaert K."/>
            <person name="Aldabe R."/>
        </authorList>
    </citation>
    <scope>IDENTIFICATION BY MASS SPECTROMETRY [LARGE SCALE ANALYSIS]</scope>
</reference>
<reference key="10">
    <citation type="journal article" date="2012" name="Proteomics">
        <title>Sites of ubiquitin attachment in Saccharomyces cerevisiae.</title>
        <authorList>
            <person name="Starita L.M."/>
            <person name="Lo R.S."/>
            <person name="Eng J.K."/>
            <person name="von Haller P.D."/>
            <person name="Fields S."/>
        </authorList>
    </citation>
    <scope>UBIQUITINATION [LARGE SCALE ANALYSIS] AT LYS-125; LYS-131 AND LYS-149</scope>
    <scope>IDENTIFICATION BY MASS SPECTROMETRY [LARGE SCALE ANALYSIS]</scope>
</reference>
<reference key="11">
    <citation type="journal article" date="2014" name="Curr. Opin. Struct. Biol.">
        <title>A new system for naming ribosomal proteins.</title>
        <authorList>
            <person name="Ban N."/>
            <person name="Beckmann R."/>
            <person name="Cate J.H.D."/>
            <person name="Dinman J.D."/>
            <person name="Dragon F."/>
            <person name="Ellis S.R."/>
            <person name="Lafontaine D.L.J."/>
            <person name="Lindahl L."/>
            <person name="Liljas A."/>
            <person name="Lipton J.M."/>
            <person name="McAlear M.A."/>
            <person name="Moore P.B."/>
            <person name="Noller H.F."/>
            <person name="Ortega J."/>
            <person name="Panse V.G."/>
            <person name="Ramakrishnan V."/>
            <person name="Spahn C.M.T."/>
            <person name="Steitz T.A."/>
            <person name="Tchorzewski M."/>
            <person name="Tollervey D."/>
            <person name="Warren A.J."/>
            <person name="Williamson J.R."/>
            <person name="Wilson D."/>
            <person name="Yonath A."/>
            <person name="Yusupov M."/>
        </authorList>
    </citation>
    <scope>NOMENCLATURE</scope>
</reference>
<reference key="12">
    <citation type="journal article" date="2010" name="Science">
        <title>Crystal structure of the eukaryotic ribosome.</title>
        <authorList>
            <person name="Ben-Shem A."/>
            <person name="Jenner L."/>
            <person name="Yusupova G."/>
            <person name="Yusupov M."/>
        </authorList>
    </citation>
    <scope>X-RAY CRYSTALLOGRAPHY (4.0 ANGSTROMS) OF 80S RIBOSOME</scope>
</reference>
<reference key="13">
    <citation type="journal article" date="2011" name="Science">
        <title>The structure of the eukaryotic ribosome at 3.0 A resolution.</title>
        <authorList>
            <person name="Ben-Shem A."/>
            <person name="Garreau de Loubresse N."/>
            <person name="Melnikov S."/>
            <person name="Jenner L."/>
            <person name="Yusupova G."/>
            <person name="Yusupov M."/>
        </authorList>
    </citation>
    <scope>X-RAY CRYSTALLOGRAPHY (3.0 ANGSTROMS) OF 80S RIBOSOME</scope>
    <scope>SUBUNIT</scope>
    <scope>SUBCELLULAR LOCATION</scope>
</reference>
<keyword id="KW-0002">3D-structure</keyword>
<keyword id="KW-0963">Cytoplasm</keyword>
<keyword id="KW-1017">Isopeptide bond</keyword>
<keyword id="KW-0597">Phosphoprotein</keyword>
<keyword id="KW-1185">Reference proteome</keyword>
<keyword id="KW-0687">Ribonucleoprotein</keyword>
<keyword id="KW-0689">Ribosomal protein</keyword>
<keyword id="KW-0832">Ubl conjugation</keyword>
<gene>
    <name evidence="5" type="primary">RPL20A</name>
    <name type="synonym">RPL18A</name>
    <name type="synonym">RPL18A2</name>
    <name type="ordered locus">YMR242C</name>
    <name type="ORF">YM9408.04C</name>
</gene>
<feature type="chain" id="PRO_0000278969" description="Large ribosomal subunit protein eL20A">
    <location>
        <begin position="1"/>
        <end position="172"/>
    </location>
</feature>
<feature type="modified residue" description="Phosphoserine" evidence="9">
    <location>
        <position position="32"/>
    </location>
</feature>
<feature type="cross-link" description="Glycyl lysine isopeptide (Lys-Gly) (interchain with G-Cter in ubiquitin)" evidence="10">
    <location>
        <position position="125"/>
    </location>
</feature>
<feature type="cross-link" description="Glycyl lysine isopeptide (Lys-Gly) (interchain with G-Cter in ubiquitin)" evidence="10">
    <location>
        <position position="131"/>
    </location>
</feature>
<feature type="cross-link" description="Glycyl lysine isopeptide (Lys-Gly) (interchain with G-Cter in ubiquitin)" evidence="10">
    <location>
        <position position="149"/>
    </location>
</feature>
<feature type="strand" evidence="11">
    <location>
        <begin position="5"/>
        <end position="11"/>
    </location>
</feature>
<feature type="strand" evidence="11">
    <location>
        <begin position="25"/>
        <end position="33"/>
    </location>
</feature>
<feature type="helix" evidence="11">
    <location>
        <begin position="34"/>
        <end position="48"/>
    </location>
</feature>
<feature type="turn" evidence="11">
    <location>
        <begin position="53"/>
        <end position="55"/>
    </location>
</feature>
<feature type="strand" evidence="11">
    <location>
        <begin position="58"/>
        <end position="63"/>
    </location>
</feature>
<feature type="strand" evidence="11">
    <location>
        <begin position="73"/>
        <end position="81"/>
    </location>
</feature>
<feature type="strand" evidence="11">
    <location>
        <begin position="88"/>
        <end position="98"/>
    </location>
</feature>
<feature type="helix" evidence="11">
    <location>
        <begin position="99"/>
        <end position="114"/>
    </location>
</feature>
<feature type="turn" evidence="11">
    <location>
        <begin position="118"/>
        <end position="120"/>
    </location>
</feature>
<feature type="strand" evidence="11">
    <location>
        <begin position="121"/>
        <end position="128"/>
    </location>
</feature>
<feature type="helix" evidence="11">
    <location>
        <begin position="138"/>
        <end position="141"/>
    </location>
</feature>
<feature type="strand" evidence="11">
    <location>
        <begin position="160"/>
        <end position="162"/>
    </location>
</feature>
<feature type="strand" evidence="11">
    <location>
        <begin position="164"/>
        <end position="166"/>
    </location>
</feature>